<reference key="1">
    <citation type="journal article" date="2004" name="Nature">
        <title>Genome evolution in yeasts.</title>
        <authorList>
            <person name="Dujon B."/>
            <person name="Sherman D."/>
            <person name="Fischer G."/>
            <person name="Durrens P."/>
            <person name="Casaregola S."/>
            <person name="Lafontaine I."/>
            <person name="de Montigny J."/>
            <person name="Marck C."/>
            <person name="Neuveglise C."/>
            <person name="Talla E."/>
            <person name="Goffard N."/>
            <person name="Frangeul L."/>
            <person name="Aigle M."/>
            <person name="Anthouard V."/>
            <person name="Babour A."/>
            <person name="Barbe V."/>
            <person name="Barnay S."/>
            <person name="Blanchin S."/>
            <person name="Beckerich J.-M."/>
            <person name="Beyne E."/>
            <person name="Bleykasten C."/>
            <person name="Boisrame A."/>
            <person name="Boyer J."/>
            <person name="Cattolico L."/>
            <person name="Confanioleri F."/>
            <person name="de Daruvar A."/>
            <person name="Despons L."/>
            <person name="Fabre E."/>
            <person name="Fairhead C."/>
            <person name="Ferry-Dumazet H."/>
            <person name="Groppi A."/>
            <person name="Hantraye F."/>
            <person name="Hennequin C."/>
            <person name="Jauniaux N."/>
            <person name="Joyet P."/>
            <person name="Kachouri R."/>
            <person name="Kerrest A."/>
            <person name="Koszul R."/>
            <person name="Lemaire M."/>
            <person name="Lesur I."/>
            <person name="Ma L."/>
            <person name="Muller H."/>
            <person name="Nicaud J.-M."/>
            <person name="Nikolski M."/>
            <person name="Oztas S."/>
            <person name="Ozier-Kalogeropoulos O."/>
            <person name="Pellenz S."/>
            <person name="Potier S."/>
            <person name="Richard G.-F."/>
            <person name="Straub M.-L."/>
            <person name="Suleau A."/>
            <person name="Swennen D."/>
            <person name="Tekaia F."/>
            <person name="Wesolowski-Louvel M."/>
            <person name="Westhof E."/>
            <person name="Wirth B."/>
            <person name="Zeniou-Meyer M."/>
            <person name="Zivanovic Y."/>
            <person name="Bolotin-Fukuhara M."/>
            <person name="Thierry A."/>
            <person name="Bouchier C."/>
            <person name="Caudron B."/>
            <person name="Scarpelli C."/>
            <person name="Gaillardin C."/>
            <person name="Weissenbach J."/>
            <person name="Wincker P."/>
            <person name="Souciet J.-L."/>
        </authorList>
    </citation>
    <scope>NUCLEOTIDE SEQUENCE [LARGE SCALE GENOMIC DNA]</scope>
    <source>
        <strain>ATCC 36239 / CBS 767 / BCRC 21394 / JCM 1990 / NBRC 0083 / IGC 2968</strain>
    </source>
</reference>
<comment type="function">
    <text evidence="1">Required for pre-18S rRNA processing. May bind microtubules (By similarity).</text>
</comment>
<comment type="subcellular location">
    <subcellularLocation>
        <location evidence="1">Nucleus</location>
        <location evidence="1">Nucleolus</location>
    </subcellularLocation>
</comment>
<comment type="similarity">
    <text evidence="5">Belongs to the NOP5/NOP56 family.</text>
</comment>
<proteinExistence type="inferred from homology"/>
<keyword id="KW-0175">Coiled coil</keyword>
<keyword id="KW-0539">Nucleus</keyword>
<keyword id="KW-1185">Reference proteome</keyword>
<keyword id="KW-0687">Ribonucleoprotein</keyword>
<keyword id="KW-0690">Ribosome biogenesis</keyword>
<keyword id="KW-0698">rRNA processing</keyword>
<sequence>MAYVLTETAAGYALLKASDKKIYKSSSLIEDLNTVEKVTEQFKIHRFEKFSSAANALEEANAIIEGRISDNLKKMLEDVKNDKKATLIVSEAKLGNAINKLGLNFSVVSDAASLDLHRAIKEFLPELLPGLDDSALKQMSLGLAHSMGRHKLKFSADKVDTMIVQAIALLDDLDKELNTYAMRCKEWYGWHFPELAKMITDSVAYARIILTMGIRSNAADTDLSEILPEEAEEQVKSAAEVSMGTEITDIDLENIKALAEQIVDFAAYREQLSNYLSSRMKAIAPNLTALVGELVGARLIAHSGSLTSLAKAPASTIQILGAEKALFRALKTKHDTPKYGLLYHASLVGQASGKNKGKIARVLAAKAAVALRYDSLAEDRDDSGDFGLSVRTKVESRLSALEGRDLRTTAKVIREQPKVDITEARAYNADADAPMADADSDDESETEEEPKKEKKDKKEKKDKKEKKDKKDKKRKREEDDEEEEEDSKKSKKEKKEKKEKKDKKEKKDKKEKKKEKK</sequence>
<protein>
    <recommendedName>
        <fullName>Nucleolar protein 58</fullName>
    </recommendedName>
</protein>
<accession>Q6BIX6</accession>
<name>NOP58_DEBHA</name>
<evidence type="ECO:0000250" key="1"/>
<evidence type="ECO:0000255" key="2"/>
<evidence type="ECO:0000255" key="3">
    <source>
        <dbReference type="PROSITE-ProRule" id="PRU00690"/>
    </source>
</evidence>
<evidence type="ECO:0000256" key="4">
    <source>
        <dbReference type="SAM" id="MobiDB-lite"/>
    </source>
</evidence>
<evidence type="ECO:0000305" key="5"/>
<gene>
    <name type="primary">NOP58</name>
    <name type="ordered locus">DEHA2G06842g</name>
</gene>
<feature type="chain" id="PRO_0000350983" description="Nucleolar protein 58">
    <location>
        <begin position="1"/>
        <end position="517"/>
    </location>
</feature>
<feature type="domain" description="Nop" evidence="3">
    <location>
        <begin position="283"/>
        <end position="403"/>
    </location>
</feature>
<feature type="region of interest" description="Disordered" evidence="4">
    <location>
        <begin position="423"/>
        <end position="517"/>
    </location>
</feature>
<feature type="coiled-coil region" evidence="2">
    <location>
        <begin position="456"/>
        <end position="517"/>
    </location>
</feature>
<feature type="compositionally biased region" description="Acidic residues" evidence="4">
    <location>
        <begin position="438"/>
        <end position="448"/>
    </location>
</feature>
<feature type="compositionally biased region" description="Basic residues" evidence="4">
    <location>
        <begin position="454"/>
        <end position="475"/>
    </location>
</feature>
<feature type="compositionally biased region" description="Basic residues" evidence="4">
    <location>
        <begin position="489"/>
        <end position="517"/>
    </location>
</feature>
<dbReference type="EMBL" id="CR382139">
    <property type="protein sequence ID" value="CAG90306.2"/>
    <property type="molecule type" value="Genomic_DNA"/>
</dbReference>
<dbReference type="RefSeq" id="XP_461845.2">
    <property type="nucleotide sequence ID" value="XM_461845.1"/>
</dbReference>
<dbReference type="SMR" id="Q6BIX6"/>
<dbReference type="FunCoup" id="Q6BIX6">
    <property type="interactions" value="1729"/>
</dbReference>
<dbReference type="STRING" id="284592.Q6BIX6"/>
<dbReference type="GeneID" id="2904724"/>
<dbReference type="KEGG" id="dha:DEHA2G06842g"/>
<dbReference type="VEuPathDB" id="FungiDB:DEHA2G06842g"/>
<dbReference type="eggNOG" id="KOG2572">
    <property type="taxonomic scope" value="Eukaryota"/>
</dbReference>
<dbReference type="HOGENOM" id="CLU_015495_5_2_1"/>
<dbReference type="InParanoid" id="Q6BIX6"/>
<dbReference type="OMA" id="MGMRSNW"/>
<dbReference type="OrthoDB" id="6780543at2759"/>
<dbReference type="Proteomes" id="UP000000599">
    <property type="component" value="Chromosome G"/>
</dbReference>
<dbReference type="GO" id="GO:0031428">
    <property type="term" value="C:box C/D methylation guide snoRNP complex"/>
    <property type="evidence" value="ECO:0007669"/>
    <property type="project" value="EnsemblFungi"/>
</dbReference>
<dbReference type="GO" id="GO:0005730">
    <property type="term" value="C:nucleolus"/>
    <property type="evidence" value="ECO:0007669"/>
    <property type="project" value="UniProtKB-SubCell"/>
</dbReference>
<dbReference type="GO" id="GO:0032040">
    <property type="term" value="C:small-subunit processome"/>
    <property type="evidence" value="ECO:0007669"/>
    <property type="project" value="EnsemblFungi"/>
</dbReference>
<dbReference type="GO" id="GO:0030515">
    <property type="term" value="F:snoRNA binding"/>
    <property type="evidence" value="ECO:0007669"/>
    <property type="project" value="InterPro"/>
</dbReference>
<dbReference type="GO" id="GO:0017069">
    <property type="term" value="F:snRNA binding"/>
    <property type="evidence" value="ECO:0007669"/>
    <property type="project" value="EnsemblFungi"/>
</dbReference>
<dbReference type="GO" id="GO:0000494">
    <property type="term" value="P:box C/D sno(s)RNA 3'-end processing"/>
    <property type="evidence" value="ECO:0007669"/>
    <property type="project" value="EnsemblFungi"/>
</dbReference>
<dbReference type="GO" id="GO:0000480">
    <property type="term" value="P:endonucleolytic cleavage in 5'-ETS of tricistronic rRNA transcript (SSU-rRNA, 5.8S rRNA, LSU-rRNA)"/>
    <property type="evidence" value="ECO:0007669"/>
    <property type="project" value="EnsemblFungi"/>
</dbReference>
<dbReference type="GO" id="GO:0000447">
    <property type="term" value="P:endonucleolytic cleavage in ITS1 to separate SSU-rRNA from 5.8S rRNA and LSU-rRNA from tricistronic rRNA transcript (SSU-rRNA, 5.8S rRNA, LSU-rRNA)"/>
    <property type="evidence" value="ECO:0007669"/>
    <property type="project" value="EnsemblFungi"/>
</dbReference>
<dbReference type="GO" id="GO:0000472">
    <property type="term" value="P:endonucleolytic cleavage to generate mature 5'-end of SSU-rRNA from (SSU-rRNA, 5.8S rRNA, LSU-rRNA)"/>
    <property type="evidence" value="ECO:0007669"/>
    <property type="project" value="EnsemblFungi"/>
</dbReference>
<dbReference type="GO" id="GO:1902570">
    <property type="term" value="P:protein localization to nucleolus"/>
    <property type="evidence" value="ECO:0007669"/>
    <property type="project" value="EnsemblFungi"/>
</dbReference>
<dbReference type="GO" id="GO:0000452">
    <property type="term" value="P:snoRNA guided rRNA 2'-O-methylation"/>
    <property type="evidence" value="ECO:0007669"/>
    <property type="project" value="EnsemblFungi"/>
</dbReference>
<dbReference type="FunFam" id="1.10.246.90:FF:000003">
    <property type="entry name" value="Nucleolar protein 58"/>
    <property type="match status" value="1"/>
</dbReference>
<dbReference type="FunFam" id="1.10.287.4070:FF:000001">
    <property type="entry name" value="Probable Nucleolar protein 58"/>
    <property type="match status" value="1"/>
</dbReference>
<dbReference type="Gene3D" id="1.10.287.4070">
    <property type="match status" value="1"/>
</dbReference>
<dbReference type="Gene3D" id="1.10.246.90">
    <property type="entry name" value="Nop domain"/>
    <property type="match status" value="1"/>
</dbReference>
<dbReference type="InterPro" id="IPR045056">
    <property type="entry name" value="Nop56/Nop58"/>
</dbReference>
<dbReference type="InterPro" id="IPR012974">
    <property type="entry name" value="NOP58/56_N"/>
</dbReference>
<dbReference type="InterPro" id="IPR042239">
    <property type="entry name" value="Nop_C"/>
</dbReference>
<dbReference type="InterPro" id="IPR002687">
    <property type="entry name" value="Nop_dom"/>
</dbReference>
<dbReference type="InterPro" id="IPR036070">
    <property type="entry name" value="Nop_dom_sf"/>
</dbReference>
<dbReference type="InterPro" id="IPR012976">
    <property type="entry name" value="NOSIC"/>
</dbReference>
<dbReference type="PANTHER" id="PTHR10894">
    <property type="entry name" value="NUCLEOLAR PROTEIN 5 NUCLEOLAR PROTEIN NOP5 NOP58"/>
    <property type="match status" value="1"/>
</dbReference>
<dbReference type="PANTHER" id="PTHR10894:SF1">
    <property type="entry name" value="NUCLEOLAR PROTEIN 58"/>
    <property type="match status" value="1"/>
</dbReference>
<dbReference type="Pfam" id="PF01798">
    <property type="entry name" value="Nop"/>
    <property type="match status" value="1"/>
</dbReference>
<dbReference type="Pfam" id="PF08156">
    <property type="entry name" value="NOP5NT"/>
    <property type="match status" value="1"/>
</dbReference>
<dbReference type="SMART" id="SM00931">
    <property type="entry name" value="NOSIC"/>
    <property type="match status" value="1"/>
</dbReference>
<dbReference type="SUPFAM" id="SSF89124">
    <property type="entry name" value="Nop domain"/>
    <property type="match status" value="1"/>
</dbReference>
<dbReference type="PROSITE" id="PS51358">
    <property type="entry name" value="NOP"/>
    <property type="match status" value="1"/>
</dbReference>
<organism>
    <name type="scientific">Debaryomyces hansenii (strain ATCC 36239 / CBS 767 / BCRC 21394 / JCM 1990 / NBRC 0083 / IGC 2968)</name>
    <name type="common">Yeast</name>
    <name type="synonym">Torulaspora hansenii</name>
    <dbReference type="NCBI Taxonomy" id="284592"/>
    <lineage>
        <taxon>Eukaryota</taxon>
        <taxon>Fungi</taxon>
        <taxon>Dikarya</taxon>
        <taxon>Ascomycota</taxon>
        <taxon>Saccharomycotina</taxon>
        <taxon>Pichiomycetes</taxon>
        <taxon>Debaryomycetaceae</taxon>
        <taxon>Debaryomyces</taxon>
    </lineage>
</organism>